<proteinExistence type="inferred from homology"/>
<reference key="1">
    <citation type="journal article" date="2003" name="PLoS Biol.">
        <title>The genome sequence of Caenorhabditis briggsae: a platform for comparative genomics.</title>
        <authorList>
            <person name="Stein L.D."/>
            <person name="Bao Z."/>
            <person name="Blasiar D."/>
            <person name="Blumenthal T."/>
            <person name="Brent M.R."/>
            <person name="Chen N."/>
            <person name="Chinwalla A."/>
            <person name="Clarke L."/>
            <person name="Clee C."/>
            <person name="Coghlan A."/>
            <person name="Coulson A."/>
            <person name="D'Eustachio P."/>
            <person name="Fitch D.H.A."/>
            <person name="Fulton L.A."/>
            <person name="Fulton R.E."/>
            <person name="Griffiths-Jones S."/>
            <person name="Harris T.W."/>
            <person name="Hillier L.W."/>
            <person name="Kamath R."/>
            <person name="Kuwabara P.E."/>
            <person name="Mardis E.R."/>
            <person name="Marra M.A."/>
            <person name="Miner T.L."/>
            <person name="Minx P."/>
            <person name="Mullikin J.C."/>
            <person name="Plumb R.W."/>
            <person name="Rogers J."/>
            <person name="Schein J.E."/>
            <person name="Sohrmann M."/>
            <person name="Spieth J."/>
            <person name="Stajich J.E."/>
            <person name="Wei C."/>
            <person name="Willey D."/>
            <person name="Wilson R.K."/>
            <person name="Durbin R.M."/>
            <person name="Waterston R.H."/>
        </authorList>
    </citation>
    <scope>NUCLEOTIDE SEQUENCE [LARGE SCALE GENOMIC DNA]</scope>
    <source>
        <strain>AF16</strain>
    </source>
</reference>
<sequence length="326" mass="37050">MMSSRTRKIYLFVFMFISTSLQLMNGEAKAEPETFRQFLYNKQKGTVLGRTGTSWCQITVFYIIFYIFLSAFFIGCLAIFLKTLDPKVPRFYGKGTIIGVNPGVGYQPWLKENPDSTLIKFNLQDSKSWEPYVKQLDGYFSRYNNTNDTRECGAEDSNEALQTDPDSLPCRFDLGLFEKANCGAKDQYGFKSGKPCVVVSLNRLIGWRPVDYDGNSVPEEIKSRYKSGSITINCEGATPFDKEHLGKVKYIPEAGIDGRYYPYVFLPSYQQPIAMVKFDTIPRNKLVIVECRAYASNIEHDVSTRIGMVYFELFVEDKKPVAAPAA</sequence>
<dbReference type="EMBL" id="HE601041">
    <property type="protein sequence ID" value="CAP27679.2"/>
    <property type="status" value="ALT_INIT"/>
    <property type="molecule type" value="Genomic_DNA"/>
</dbReference>
<dbReference type="SMR" id="A8X4W9"/>
<dbReference type="FunCoup" id="A8X4W9">
    <property type="interactions" value="1216"/>
</dbReference>
<dbReference type="STRING" id="6238.A8X4W9"/>
<dbReference type="GlyCosmos" id="A8X4W9">
    <property type="glycosylation" value="2 sites, No reported glycans"/>
</dbReference>
<dbReference type="WormBase" id="CBG07375">
    <property type="protein sequence ID" value="CBP07601"/>
    <property type="gene ID" value="WBGene00029440"/>
    <property type="gene designation" value="Cbr-nkb-3"/>
</dbReference>
<dbReference type="eggNOG" id="KOG3927">
    <property type="taxonomic scope" value="Eukaryota"/>
</dbReference>
<dbReference type="HOGENOM" id="CLU_057702_0_0_1"/>
<dbReference type="InParanoid" id="A8X4W9"/>
<dbReference type="Proteomes" id="UP000008549">
    <property type="component" value="Unassembled WGS sequence"/>
</dbReference>
<dbReference type="GO" id="GO:0005890">
    <property type="term" value="C:sodium:potassium-exchanging ATPase complex"/>
    <property type="evidence" value="ECO:0000318"/>
    <property type="project" value="GO_Central"/>
</dbReference>
<dbReference type="GO" id="GO:0001671">
    <property type="term" value="F:ATPase activator activity"/>
    <property type="evidence" value="ECO:0000318"/>
    <property type="project" value="GO_Central"/>
</dbReference>
<dbReference type="GO" id="GO:0030007">
    <property type="term" value="P:intracellular potassium ion homeostasis"/>
    <property type="evidence" value="ECO:0000318"/>
    <property type="project" value="GO_Central"/>
</dbReference>
<dbReference type="GO" id="GO:0006883">
    <property type="term" value="P:intracellular sodium ion homeostasis"/>
    <property type="evidence" value="ECO:0000318"/>
    <property type="project" value="GO_Central"/>
</dbReference>
<dbReference type="GO" id="GO:1990573">
    <property type="term" value="P:potassium ion import across plasma membrane"/>
    <property type="evidence" value="ECO:0000318"/>
    <property type="project" value="GO_Central"/>
</dbReference>
<dbReference type="GO" id="GO:0036376">
    <property type="term" value="P:sodium ion export across plasma membrane"/>
    <property type="evidence" value="ECO:0000318"/>
    <property type="project" value="GO_Central"/>
</dbReference>
<dbReference type="FunFam" id="2.60.40.1660:FF:000008">
    <property type="entry name" value="Probable sodium/potassium-transporting ATPase subunit beta-3"/>
    <property type="match status" value="1"/>
</dbReference>
<dbReference type="Gene3D" id="2.60.40.1660">
    <property type="entry name" value="Na, k-atpase alpha subunit"/>
    <property type="match status" value="1"/>
</dbReference>
<dbReference type="InterPro" id="IPR000402">
    <property type="entry name" value="Na/K_ATPase_sub_beta"/>
</dbReference>
<dbReference type="InterPro" id="IPR038702">
    <property type="entry name" value="Na/K_ATPase_sub_beta_sf"/>
</dbReference>
<dbReference type="PANTHER" id="PTHR11523:SF28">
    <property type="entry name" value="NA_K-ATPASE BETA SUBUNIT ISOFORM 4-RELATED"/>
    <property type="match status" value="1"/>
</dbReference>
<dbReference type="PANTHER" id="PTHR11523">
    <property type="entry name" value="SODIUM/POTASSIUM-DEPENDENT ATPASE BETA SUBUNIT"/>
    <property type="match status" value="1"/>
</dbReference>
<dbReference type="Pfam" id="PF00287">
    <property type="entry name" value="Na_K-ATPase"/>
    <property type="match status" value="1"/>
</dbReference>
<dbReference type="PROSITE" id="PS00390">
    <property type="entry name" value="ATPASE_NA_K_BETA_1"/>
    <property type="match status" value="1"/>
</dbReference>
<protein>
    <recommendedName>
        <fullName evidence="3">Probable sodium/potassium-transporting ATPase subunit beta-3</fullName>
    </recommendedName>
    <alternativeName>
        <fullName evidence="3">Sodium/potassium-dependent ATPase subunit beta-3</fullName>
    </alternativeName>
</protein>
<feature type="chain" id="PRO_0000394763" description="Probable sodium/potassium-transporting ATPase subunit beta-3">
    <location>
        <begin position="1"/>
        <end position="326"/>
    </location>
</feature>
<feature type="topological domain" description="Cytoplasmic" evidence="4">
    <location>
        <begin position="1"/>
        <end position="59"/>
    </location>
</feature>
<feature type="transmembrane region" description="Helical; Signal-anchor for type II membrane protein" evidence="4">
    <location>
        <begin position="60"/>
        <end position="80"/>
    </location>
</feature>
<feature type="topological domain" description="Lumenal" evidence="4">
    <location>
        <begin position="81"/>
        <end position="326"/>
    </location>
</feature>
<feature type="glycosylation site" description="N-linked (GlcNAc...) asparagine" evidence="4">
    <location>
        <position position="144"/>
    </location>
</feature>
<feature type="glycosylation site" description="N-linked (GlcNAc...) asparagine" evidence="4">
    <location>
        <position position="147"/>
    </location>
</feature>
<feature type="disulfide bond" evidence="1">
    <location>
        <begin position="234"/>
        <end position="291"/>
    </location>
</feature>
<comment type="function">
    <text evidence="2 3">This is the non-catalytic component of the active enzyme, which catalyzes the hydrolysis of ATP coupled with the exchange of Na(+) and K(+) ions across the plasma membrane. The beta subunit regulates, through assembly of alpha/beta heterodimers, the number of sodium pumps transported to the plasma membrane. Implicated in genomic response to various soil bacteria that affects fitness, lifespan and brood size (By similarity).</text>
</comment>
<comment type="subunit">
    <text evidence="5">The sodium/potassium-transporting ATPase is composed of a catalytic alpha subunit, an auxiliary non-catalytic beta subunit and an additional regulatory subunit.</text>
</comment>
<comment type="subcellular location">
    <subcellularLocation>
        <location evidence="5">Cell membrane</location>
        <topology evidence="5">Single-pass type II membrane protein</topology>
    </subcellularLocation>
</comment>
<comment type="similarity">
    <text evidence="4">Belongs to the X(+)/potassium ATPases subunit beta family.</text>
</comment>
<comment type="sequence caution" evidence="5">
    <conflict type="erroneous initiation">
        <sequence resource="EMBL-CDS" id="CAP27679"/>
    </conflict>
    <text>Truncated N-terminus.</text>
</comment>
<evidence type="ECO:0000250" key="1">
    <source>
        <dbReference type="UniProtKB" id="P06583"/>
    </source>
</evidence>
<evidence type="ECO:0000250" key="2">
    <source>
        <dbReference type="UniProtKB" id="P25169"/>
    </source>
</evidence>
<evidence type="ECO:0000250" key="3">
    <source>
        <dbReference type="UniProtKB" id="Q9XUY5"/>
    </source>
</evidence>
<evidence type="ECO:0000255" key="4"/>
<evidence type="ECO:0000305" key="5"/>
<accession>A8X4W9</accession>
<gene>
    <name type="primary">nkb-3</name>
    <name type="ORF">CBG07375</name>
</gene>
<organism>
    <name type="scientific">Caenorhabditis briggsae</name>
    <dbReference type="NCBI Taxonomy" id="6238"/>
    <lineage>
        <taxon>Eukaryota</taxon>
        <taxon>Metazoa</taxon>
        <taxon>Ecdysozoa</taxon>
        <taxon>Nematoda</taxon>
        <taxon>Chromadorea</taxon>
        <taxon>Rhabditida</taxon>
        <taxon>Rhabditina</taxon>
        <taxon>Rhabditomorpha</taxon>
        <taxon>Rhabditoidea</taxon>
        <taxon>Rhabditidae</taxon>
        <taxon>Peloderinae</taxon>
        <taxon>Caenorhabditis</taxon>
    </lineage>
</organism>
<keyword id="KW-1003">Cell membrane</keyword>
<keyword id="KW-1015">Disulfide bond</keyword>
<keyword id="KW-0325">Glycoprotein</keyword>
<keyword id="KW-0406">Ion transport</keyword>
<keyword id="KW-0472">Membrane</keyword>
<keyword id="KW-0630">Potassium</keyword>
<keyword id="KW-0633">Potassium transport</keyword>
<keyword id="KW-1185">Reference proteome</keyword>
<keyword id="KW-0735">Signal-anchor</keyword>
<keyword id="KW-0915">Sodium</keyword>
<keyword id="KW-0739">Sodium transport</keyword>
<keyword id="KW-0740">Sodium/potassium transport</keyword>
<keyword id="KW-0812">Transmembrane</keyword>
<keyword id="KW-1133">Transmembrane helix</keyword>
<keyword id="KW-0813">Transport</keyword>
<name>AT1B3_CAEBR</name>